<gene>
    <name evidence="1" type="primary">infC</name>
    <name type="ordered locus">CC_1049</name>
</gene>
<accession>Q9A9D9</accession>
<protein>
    <recommendedName>
        <fullName evidence="1">Translation initiation factor IF-3</fullName>
    </recommendedName>
</protein>
<keyword id="KW-0963">Cytoplasm</keyword>
<keyword id="KW-0396">Initiation factor</keyword>
<keyword id="KW-0648">Protein biosynthesis</keyword>
<keyword id="KW-1185">Reference proteome</keyword>
<reference key="1">
    <citation type="journal article" date="2001" name="Proc. Natl. Acad. Sci. U.S.A.">
        <title>Complete genome sequence of Caulobacter crescentus.</title>
        <authorList>
            <person name="Nierman W.C."/>
            <person name="Feldblyum T.V."/>
            <person name="Laub M.T."/>
            <person name="Paulsen I.T."/>
            <person name="Nelson K.E."/>
            <person name="Eisen J.A."/>
            <person name="Heidelberg J.F."/>
            <person name="Alley M.R.K."/>
            <person name="Ohta N."/>
            <person name="Maddock J.R."/>
            <person name="Potocka I."/>
            <person name="Nelson W.C."/>
            <person name="Newton A."/>
            <person name="Stephens C."/>
            <person name="Phadke N.D."/>
            <person name="Ely B."/>
            <person name="DeBoy R.T."/>
            <person name="Dodson R.J."/>
            <person name="Durkin A.S."/>
            <person name="Gwinn M.L."/>
            <person name="Haft D.H."/>
            <person name="Kolonay J.F."/>
            <person name="Smit J."/>
            <person name="Craven M.B."/>
            <person name="Khouri H.M."/>
            <person name="Shetty J."/>
            <person name="Berry K.J."/>
            <person name="Utterback T.R."/>
            <person name="Tran K."/>
            <person name="Wolf A.M."/>
            <person name="Vamathevan J.J."/>
            <person name="Ermolaeva M.D."/>
            <person name="White O."/>
            <person name="Salzberg S.L."/>
            <person name="Venter J.C."/>
            <person name="Shapiro L."/>
            <person name="Fraser C.M."/>
        </authorList>
    </citation>
    <scope>NUCLEOTIDE SEQUENCE [LARGE SCALE GENOMIC DNA]</scope>
    <source>
        <strain>ATCC 19089 / CIP 103742 / CB 15</strain>
    </source>
</reference>
<evidence type="ECO:0000255" key="1">
    <source>
        <dbReference type="HAMAP-Rule" id="MF_00080"/>
    </source>
</evidence>
<proteinExistence type="inferred from homology"/>
<organism>
    <name type="scientific">Caulobacter vibrioides (strain ATCC 19089 / CIP 103742 / CB 15)</name>
    <name type="common">Caulobacter crescentus</name>
    <dbReference type="NCBI Taxonomy" id="190650"/>
    <lineage>
        <taxon>Bacteria</taxon>
        <taxon>Pseudomonadati</taxon>
        <taxon>Pseudomonadota</taxon>
        <taxon>Alphaproteobacteria</taxon>
        <taxon>Caulobacterales</taxon>
        <taxon>Caulobacteraceae</taxon>
        <taxon>Caulobacter</taxon>
    </lineage>
</organism>
<name>IF3_CAUVC</name>
<feature type="chain" id="PRO_0000177501" description="Translation initiation factor IF-3">
    <location>
        <begin position="1"/>
        <end position="173"/>
    </location>
</feature>
<comment type="function">
    <text evidence="1">IF-3 binds to the 30S ribosomal subunit and shifts the equilibrium between 70S ribosomes and their 50S and 30S subunits in favor of the free subunits, thus enhancing the availability of 30S subunits on which protein synthesis initiation begins.</text>
</comment>
<comment type="subunit">
    <text evidence="1">Monomer.</text>
</comment>
<comment type="subcellular location">
    <subcellularLocation>
        <location evidence="1">Cytoplasm</location>
    </subcellularLocation>
</comment>
<comment type="similarity">
    <text evidence="1">Belongs to the IF-3 family.</text>
</comment>
<dbReference type="EMBL" id="AE005673">
    <property type="protein sequence ID" value="AAK23033.1"/>
    <property type="molecule type" value="Genomic_DNA"/>
</dbReference>
<dbReference type="PIR" id="E87379">
    <property type="entry name" value="E87379"/>
</dbReference>
<dbReference type="RefSeq" id="NP_419865.1">
    <property type="nucleotide sequence ID" value="NC_002696.2"/>
</dbReference>
<dbReference type="RefSeq" id="WP_010918933.1">
    <property type="nucleotide sequence ID" value="NC_002696.2"/>
</dbReference>
<dbReference type="SMR" id="Q9A9D9"/>
<dbReference type="STRING" id="190650.CC_1049"/>
<dbReference type="EnsemblBacteria" id="AAK23033">
    <property type="protein sequence ID" value="AAK23033"/>
    <property type="gene ID" value="CC_1049"/>
</dbReference>
<dbReference type="KEGG" id="ccr:CC_1049"/>
<dbReference type="PATRIC" id="fig|190650.5.peg.1066"/>
<dbReference type="eggNOG" id="COG0290">
    <property type="taxonomic scope" value="Bacteria"/>
</dbReference>
<dbReference type="HOGENOM" id="CLU_054919_3_2_5"/>
<dbReference type="BioCyc" id="CAULO:CC1049-MONOMER"/>
<dbReference type="Proteomes" id="UP000001816">
    <property type="component" value="Chromosome"/>
</dbReference>
<dbReference type="GO" id="GO:0005829">
    <property type="term" value="C:cytosol"/>
    <property type="evidence" value="ECO:0007669"/>
    <property type="project" value="TreeGrafter"/>
</dbReference>
<dbReference type="GO" id="GO:0016020">
    <property type="term" value="C:membrane"/>
    <property type="evidence" value="ECO:0007669"/>
    <property type="project" value="TreeGrafter"/>
</dbReference>
<dbReference type="GO" id="GO:0043022">
    <property type="term" value="F:ribosome binding"/>
    <property type="evidence" value="ECO:0007669"/>
    <property type="project" value="TreeGrafter"/>
</dbReference>
<dbReference type="GO" id="GO:0003743">
    <property type="term" value="F:translation initiation factor activity"/>
    <property type="evidence" value="ECO:0007669"/>
    <property type="project" value="UniProtKB-UniRule"/>
</dbReference>
<dbReference type="GO" id="GO:0032790">
    <property type="term" value="P:ribosome disassembly"/>
    <property type="evidence" value="ECO:0007669"/>
    <property type="project" value="TreeGrafter"/>
</dbReference>
<dbReference type="FunFam" id="3.10.20.80:FF:000001">
    <property type="entry name" value="Translation initiation factor IF-3"/>
    <property type="match status" value="1"/>
</dbReference>
<dbReference type="FunFam" id="3.30.110.10:FF:000001">
    <property type="entry name" value="Translation initiation factor IF-3"/>
    <property type="match status" value="1"/>
</dbReference>
<dbReference type="Gene3D" id="3.30.110.10">
    <property type="entry name" value="Translation initiation factor 3 (IF-3), C-terminal domain"/>
    <property type="match status" value="1"/>
</dbReference>
<dbReference type="Gene3D" id="3.10.20.80">
    <property type="entry name" value="Translation initiation factor 3 (IF-3), N-terminal domain"/>
    <property type="match status" value="1"/>
</dbReference>
<dbReference type="HAMAP" id="MF_00080">
    <property type="entry name" value="IF_3"/>
    <property type="match status" value="1"/>
</dbReference>
<dbReference type="InterPro" id="IPR036788">
    <property type="entry name" value="T_IF-3_C_sf"/>
</dbReference>
<dbReference type="InterPro" id="IPR036787">
    <property type="entry name" value="T_IF-3_N_sf"/>
</dbReference>
<dbReference type="InterPro" id="IPR019813">
    <property type="entry name" value="Translation_initiation_fac3_CS"/>
</dbReference>
<dbReference type="InterPro" id="IPR001288">
    <property type="entry name" value="Translation_initiation_fac_3"/>
</dbReference>
<dbReference type="InterPro" id="IPR019815">
    <property type="entry name" value="Translation_initiation_fac_3_C"/>
</dbReference>
<dbReference type="InterPro" id="IPR019814">
    <property type="entry name" value="Translation_initiation_fac_3_N"/>
</dbReference>
<dbReference type="NCBIfam" id="TIGR00168">
    <property type="entry name" value="infC"/>
    <property type="match status" value="1"/>
</dbReference>
<dbReference type="PANTHER" id="PTHR10938">
    <property type="entry name" value="TRANSLATION INITIATION FACTOR IF-3"/>
    <property type="match status" value="1"/>
</dbReference>
<dbReference type="PANTHER" id="PTHR10938:SF0">
    <property type="entry name" value="TRANSLATION INITIATION FACTOR IF-3, MITOCHONDRIAL"/>
    <property type="match status" value="1"/>
</dbReference>
<dbReference type="Pfam" id="PF00707">
    <property type="entry name" value="IF3_C"/>
    <property type="match status" value="1"/>
</dbReference>
<dbReference type="Pfam" id="PF05198">
    <property type="entry name" value="IF3_N"/>
    <property type="match status" value="1"/>
</dbReference>
<dbReference type="SUPFAM" id="SSF55200">
    <property type="entry name" value="Translation initiation factor IF3, C-terminal domain"/>
    <property type="match status" value="1"/>
</dbReference>
<dbReference type="SUPFAM" id="SSF54364">
    <property type="entry name" value="Translation initiation factor IF3, N-terminal domain"/>
    <property type="match status" value="1"/>
</dbReference>
<dbReference type="PROSITE" id="PS00938">
    <property type="entry name" value="IF3"/>
    <property type="match status" value="1"/>
</dbReference>
<sequence length="173" mass="19976">MQTPPVKDGPRINDEIRVPRVLLIDQHGEKQGEMPTASAMEAAEEAGLDLVEIVPNANPPVCKILDYGKFKFQEQKKKNEARKRQKVVELKEIKLRPNIDSHDYDVKAKAMHRFFEEGDKVKVTLRFRGREMAHPELGMKLLQKVKADFDEVAKVEYEPRMEGRQMIMILAPR</sequence>